<comment type="function">
    <text evidence="1">Produces ATP from ADP in the presence of a proton gradient across the membrane. The alpha chain is a regulatory subunit.</text>
</comment>
<comment type="catalytic activity">
    <reaction evidence="1">
        <text>ATP + H2O + 4 H(+)(in) = ADP + phosphate + 5 H(+)(out)</text>
        <dbReference type="Rhea" id="RHEA:57720"/>
        <dbReference type="ChEBI" id="CHEBI:15377"/>
        <dbReference type="ChEBI" id="CHEBI:15378"/>
        <dbReference type="ChEBI" id="CHEBI:30616"/>
        <dbReference type="ChEBI" id="CHEBI:43474"/>
        <dbReference type="ChEBI" id="CHEBI:456216"/>
        <dbReference type="EC" id="7.1.2.2"/>
    </reaction>
</comment>
<comment type="subunit">
    <text evidence="1">F-type ATPases have 2 components, CF(1) - the catalytic core - and CF(0) - the membrane proton channel. CF(1) has five subunits: alpha(3), beta(3), gamma(1), delta(1), epsilon(1). CF(0) has three main subunits: a(1), b(2) and c(9-12). The alpha and beta chains form an alternating ring which encloses part of the gamma chain. CF(1) is attached to CF(0) by a central stalk formed by the gamma and epsilon chains, while a peripheral stalk is formed by the delta and b chains.</text>
</comment>
<comment type="subcellular location">
    <subcellularLocation>
        <location evidence="1">Cell membrane</location>
        <topology evidence="1">Peripheral membrane protein</topology>
    </subcellularLocation>
</comment>
<comment type="similarity">
    <text evidence="1">Belongs to the ATPase alpha/beta chains family.</text>
</comment>
<sequence>MKNSINASEVVNIIKEKVETFDNPIKRENIGEVISVTDGITLVYGLEKAKFGEKVSFASGVEGIVLDLDHDTAGIVVLGNDRDVKEGDVVKCSGDVVQVPVGHELLGRVVNALGDPIDDGGEIRAKNKMYIESKAPGIIDRKSVHEPLQTGIKIIDLLIPIGRGQRELIIGDRQIGKTTIAIDTIINQKKINDEVNENQKIYCVYVAIGQKISTVAKVVNKLKESGALEYTTVVVASASDCAPMQFLAPYTGCTIGEFFRDNGMHCLVVYDDLSKHAVAYRQMSLLLRRPPGREAYPGDIFYVHSRLLERAAKMSDEKGQGSLTALPIIETQAGDVSAYVPTNVISITDGQIFLESELFHKGFRPAVNIGLSVSRVGSAAQLKSVKKVAGSIKLSLAQYRELEDFAKFGSDLDATVQLSLNKGKYLIELLKQKQYSPMQIEEQVLLMYIFSNLYGQLNKVQVSNINRFECDLINYFQTVHPGVLKKLSGDMNDDIKDDILGIVSDFVTQFNCV</sequence>
<protein>
    <recommendedName>
        <fullName evidence="1">ATP synthase subunit alpha</fullName>
        <ecNumber evidence="1">7.1.2.2</ecNumber>
    </recommendedName>
    <alternativeName>
        <fullName evidence="1">ATP synthase F1 sector subunit alpha</fullName>
    </alternativeName>
    <alternativeName>
        <fullName evidence="1">F-ATPase subunit alpha</fullName>
    </alternativeName>
</protein>
<accession>B3CN53</accession>
<feature type="chain" id="PRO_1000143452" description="ATP synthase subunit alpha">
    <location>
        <begin position="1"/>
        <end position="513"/>
    </location>
</feature>
<feature type="binding site" evidence="1">
    <location>
        <begin position="171"/>
        <end position="178"/>
    </location>
    <ligand>
        <name>ATP</name>
        <dbReference type="ChEBI" id="CHEBI:30616"/>
    </ligand>
</feature>
<feature type="site" description="Required for activity" evidence="1">
    <location>
        <position position="372"/>
    </location>
</feature>
<reference key="1">
    <citation type="journal article" date="2008" name="Mol. Biol. Evol.">
        <title>Genome evolution of Wolbachia strain wPip from the Culex pipiens group.</title>
        <authorList>
            <person name="Klasson L."/>
            <person name="Walker T."/>
            <person name="Sebaihia M."/>
            <person name="Sanders M.J."/>
            <person name="Quail M.A."/>
            <person name="Lord A."/>
            <person name="Sanders S."/>
            <person name="Earl J."/>
            <person name="O'Neill S.L."/>
            <person name="Thomson N."/>
            <person name="Sinkins S.P."/>
            <person name="Parkhill J."/>
        </authorList>
    </citation>
    <scope>NUCLEOTIDE SEQUENCE [LARGE SCALE GENOMIC DNA]</scope>
    <source>
        <strain>wPip</strain>
    </source>
</reference>
<organism>
    <name type="scientific">Wolbachia pipientis subsp. Culex pipiens (strain wPip)</name>
    <dbReference type="NCBI Taxonomy" id="570417"/>
    <lineage>
        <taxon>Bacteria</taxon>
        <taxon>Pseudomonadati</taxon>
        <taxon>Pseudomonadota</taxon>
        <taxon>Alphaproteobacteria</taxon>
        <taxon>Rickettsiales</taxon>
        <taxon>Anaplasmataceae</taxon>
        <taxon>Wolbachieae</taxon>
        <taxon>Wolbachia</taxon>
    </lineage>
</organism>
<dbReference type="EC" id="7.1.2.2" evidence="1"/>
<dbReference type="EMBL" id="AM999887">
    <property type="protein sequence ID" value="CAQ55301.1"/>
    <property type="molecule type" value="Genomic_DNA"/>
</dbReference>
<dbReference type="RefSeq" id="WP_007302558.1">
    <property type="nucleotide sequence ID" value="NC_010981.1"/>
</dbReference>
<dbReference type="SMR" id="B3CN53"/>
<dbReference type="KEGG" id="wpi:WP1193"/>
<dbReference type="eggNOG" id="COG0056">
    <property type="taxonomic scope" value="Bacteria"/>
</dbReference>
<dbReference type="HOGENOM" id="CLU_010091_2_1_5"/>
<dbReference type="Proteomes" id="UP000008814">
    <property type="component" value="Chromosome"/>
</dbReference>
<dbReference type="GO" id="GO:0005886">
    <property type="term" value="C:plasma membrane"/>
    <property type="evidence" value="ECO:0007669"/>
    <property type="project" value="UniProtKB-SubCell"/>
</dbReference>
<dbReference type="GO" id="GO:0045259">
    <property type="term" value="C:proton-transporting ATP synthase complex"/>
    <property type="evidence" value="ECO:0007669"/>
    <property type="project" value="UniProtKB-KW"/>
</dbReference>
<dbReference type="GO" id="GO:0043531">
    <property type="term" value="F:ADP binding"/>
    <property type="evidence" value="ECO:0007669"/>
    <property type="project" value="TreeGrafter"/>
</dbReference>
<dbReference type="GO" id="GO:0005524">
    <property type="term" value="F:ATP binding"/>
    <property type="evidence" value="ECO:0007669"/>
    <property type="project" value="UniProtKB-UniRule"/>
</dbReference>
<dbReference type="GO" id="GO:0046933">
    <property type="term" value="F:proton-transporting ATP synthase activity, rotational mechanism"/>
    <property type="evidence" value="ECO:0007669"/>
    <property type="project" value="UniProtKB-UniRule"/>
</dbReference>
<dbReference type="CDD" id="cd18113">
    <property type="entry name" value="ATP-synt_F1_alpha_C"/>
    <property type="match status" value="1"/>
</dbReference>
<dbReference type="CDD" id="cd18116">
    <property type="entry name" value="ATP-synt_F1_alpha_N"/>
    <property type="match status" value="1"/>
</dbReference>
<dbReference type="CDD" id="cd01132">
    <property type="entry name" value="F1-ATPase_alpha_CD"/>
    <property type="match status" value="1"/>
</dbReference>
<dbReference type="FunFam" id="1.20.150.20:FF:000001">
    <property type="entry name" value="ATP synthase subunit alpha"/>
    <property type="match status" value="1"/>
</dbReference>
<dbReference type="FunFam" id="3.40.50.300:FF:000002">
    <property type="entry name" value="ATP synthase subunit alpha"/>
    <property type="match status" value="1"/>
</dbReference>
<dbReference type="Gene3D" id="2.40.30.20">
    <property type="match status" value="1"/>
</dbReference>
<dbReference type="Gene3D" id="1.20.150.20">
    <property type="entry name" value="ATP synthase alpha/beta chain, C-terminal domain"/>
    <property type="match status" value="1"/>
</dbReference>
<dbReference type="Gene3D" id="3.40.50.300">
    <property type="entry name" value="P-loop containing nucleotide triphosphate hydrolases"/>
    <property type="match status" value="1"/>
</dbReference>
<dbReference type="HAMAP" id="MF_01346">
    <property type="entry name" value="ATP_synth_alpha_bact"/>
    <property type="match status" value="1"/>
</dbReference>
<dbReference type="InterPro" id="IPR023366">
    <property type="entry name" value="ATP_synth_asu-like_sf"/>
</dbReference>
<dbReference type="InterPro" id="IPR000793">
    <property type="entry name" value="ATP_synth_asu_C"/>
</dbReference>
<dbReference type="InterPro" id="IPR038376">
    <property type="entry name" value="ATP_synth_asu_C_sf"/>
</dbReference>
<dbReference type="InterPro" id="IPR033732">
    <property type="entry name" value="ATP_synth_F1_a_nt-bd_dom"/>
</dbReference>
<dbReference type="InterPro" id="IPR005294">
    <property type="entry name" value="ATP_synth_F1_asu"/>
</dbReference>
<dbReference type="InterPro" id="IPR020003">
    <property type="entry name" value="ATPase_a/bsu_AS"/>
</dbReference>
<dbReference type="InterPro" id="IPR004100">
    <property type="entry name" value="ATPase_F1/V1/A1_a/bsu_N"/>
</dbReference>
<dbReference type="InterPro" id="IPR036121">
    <property type="entry name" value="ATPase_F1/V1/A1_a/bsu_N_sf"/>
</dbReference>
<dbReference type="InterPro" id="IPR000194">
    <property type="entry name" value="ATPase_F1/V1/A1_a/bsu_nucl-bd"/>
</dbReference>
<dbReference type="InterPro" id="IPR027417">
    <property type="entry name" value="P-loop_NTPase"/>
</dbReference>
<dbReference type="NCBIfam" id="TIGR00962">
    <property type="entry name" value="atpA"/>
    <property type="match status" value="1"/>
</dbReference>
<dbReference type="NCBIfam" id="NF009884">
    <property type="entry name" value="PRK13343.1"/>
    <property type="match status" value="1"/>
</dbReference>
<dbReference type="PANTHER" id="PTHR48082">
    <property type="entry name" value="ATP SYNTHASE SUBUNIT ALPHA, MITOCHONDRIAL"/>
    <property type="match status" value="1"/>
</dbReference>
<dbReference type="PANTHER" id="PTHR48082:SF2">
    <property type="entry name" value="ATP SYNTHASE SUBUNIT ALPHA, MITOCHONDRIAL"/>
    <property type="match status" value="1"/>
</dbReference>
<dbReference type="Pfam" id="PF00006">
    <property type="entry name" value="ATP-synt_ab"/>
    <property type="match status" value="1"/>
</dbReference>
<dbReference type="Pfam" id="PF00306">
    <property type="entry name" value="ATP-synt_ab_C"/>
    <property type="match status" value="1"/>
</dbReference>
<dbReference type="Pfam" id="PF02874">
    <property type="entry name" value="ATP-synt_ab_N"/>
    <property type="match status" value="1"/>
</dbReference>
<dbReference type="PIRSF" id="PIRSF039088">
    <property type="entry name" value="F_ATPase_subunit_alpha"/>
    <property type="match status" value="1"/>
</dbReference>
<dbReference type="SUPFAM" id="SSF47917">
    <property type="entry name" value="C-terminal domain of alpha and beta subunits of F1 ATP synthase"/>
    <property type="match status" value="1"/>
</dbReference>
<dbReference type="SUPFAM" id="SSF50615">
    <property type="entry name" value="N-terminal domain of alpha and beta subunits of F1 ATP synthase"/>
    <property type="match status" value="1"/>
</dbReference>
<dbReference type="SUPFAM" id="SSF52540">
    <property type="entry name" value="P-loop containing nucleoside triphosphate hydrolases"/>
    <property type="match status" value="1"/>
</dbReference>
<dbReference type="PROSITE" id="PS00152">
    <property type="entry name" value="ATPASE_ALPHA_BETA"/>
    <property type="match status" value="1"/>
</dbReference>
<gene>
    <name evidence="1" type="primary">atpA</name>
    <name type="ordered locus">WP1193</name>
</gene>
<evidence type="ECO:0000255" key="1">
    <source>
        <dbReference type="HAMAP-Rule" id="MF_01346"/>
    </source>
</evidence>
<keyword id="KW-0066">ATP synthesis</keyword>
<keyword id="KW-0067">ATP-binding</keyword>
<keyword id="KW-1003">Cell membrane</keyword>
<keyword id="KW-0139">CF(1)</keyword>
<keyword id="KW-0375">Hydrogen ion transport</keyword>
<keyword id="KW-0406">Ion transport</keyword>
<keyword id="KW-0472">Membrane</keyword>
<keyword id="KW-0547">Nucleotide-binding</keyword>
<keyword id="KW-1278">Translocase</keyword>
<keyword id="KW-0813">Transport</keyword>
<proteinExistence type="inferred from homology"/>
<name>ATPA_WOLPP</name>